<dbReference type="EC" id="3.1.3.16" evidence="1"/>
<dbReference type="EC" id="3.1.3.48" evidence="1"/>
<dbReference type="EMBL" id="AK075665">
    <property type="protein sequence ID" value="BAC35883.1"/>
    <property type="molecule type" value="mRNA"/>
</dbReference>
<dbReference type="EMBL" id="AY294423">
    <property type="protein sequence ID" value="AAQ01518.1"/>
    <property type="molecule type" value="Genomic_DNA"/>
</dbReference>
<dbReference type="EMBL" id="BC147517">
    <property type="protein sequence ID" value="AAI47518.1"/>
    <property type="molecule type" value="mRNA"/>
</dbReference>
<dbReference type="EMBL" id="BC147531">
    <property type="protein sequence ID" value="AAI47532.1"/>
    <property type="molecule type" value="mRNA"/>
</dbReference>
<dbReference type="CCDS" id="CCDS26863.1"/>
<dbReference type="RefSeq" id="NP_001013848.1">
    <property type="nucleotide sequence ID" value="NM_001013826.3"/>
</dbReference>
<dbReference type="RefSeq" id="NP_001405798.1">
    <property type="nucleotide sequence ID" value="NM_001418869.1"/>
</dbReference>
<dbReference type="RefSeq" id="XP_006519280.1">
    <property type="nucleotide sequence ID" value="XM_006519217.3"/>
</dbReference>
<dbReference type="SMR" id="Q8BK84"/>
<dbReference type="BioGRID" id="242278">
    <property type="interactions" value="1"/>
</dbReference>
<dbReference type="FunCoup" id="Q8BK84">
    <property type="interactions" value="133"/>
</dbReference>
<dbReference type="IntAct" id="Q8BK84">
    <property type="interactions" value="1"/>
</dbReference>
<dbReference type="MINT" id="Q8BK84"/>
<dbReference type="STRING" id="10090.ENSMUSP00000073534"/>
<dbReference type="PhosphoSitePlus" id="Q8BK84"/>
<dbReference type="jPOST" id="Q8BK84"/>
<dbReference type="PaxDb" id="10090-ENSMUSP00000073534"/>
<dbReference type="ProteomicsDB" id="279819"/>
<dbReference type="Antibodypedia" id="29633">
    <property type="antibodies" value="108 antibodies from 12 providers"/>
</dbReference>
<dbReference type="DNASU" id="435391"/>
<dbReference type="Ensembl" id="ENSMUST00000073870.7">
    <property type="protein sequence ID" value="ENSMUSP00000073534.6"/>
    <property type="gene ID" value="ENSMUSG00000063821.7"/>
</dbReference>
<dbReference type="GeneID" id="435391"/>
<dbReference type="KEGG" id="mmu:435391"/>
<dbReference type="UCSC" id="uc007sll.1">
    <property type="organism name" value="mouse"/>
</dbReference>
<dbReference type="AGR" id="MGI:3647127"/>
<dbReference type="CTD" id="338599"/>
<dbReference type="MGI" id="MGI:3647127">
    <property type="gene designation" value="Dusp29"/>
</dbReference>
<dbReference type="VEuPathDB" id="HostDB:ENSMUSG00000063821"/>
<dbReference type="eggNOG" id="KOG1716">
    <property type="taxonomic scope" value="Eukaryota"/>
</dbReference>
<dbReference type="GeneTree" id="ENSGT00940000160190"/>
<dbReference type="HOGENOM" id="CLU_027074_11_3_1"/>
<dbReference type="InParanoid" id="Q8BK84"/>
<dbReference type="OMA" id="NAAHGQR"/>
<dbReference type="OrthoDB" id="10252009at2759"/>
<dbReference type="PhylomeDB" id="Q8BK84"/>
<dbReference type="TreeFam" id="TF105128"/>
<dbReference type="BioGRID-ORCS" id="435391">
    <property type="hits" value="2 hits in 77 CRISPR screens"/>
</dbReference>
<dbReference type="ChiTaRS" id="Dupd1">
    <property type="organism name" value="mouse"/>
</dbReference>
<dbReference type="PRO" id="PR:Q8BK84"/>
<dbReference type="Proteomes" id="UP000000589">
    <property type="component" value="Chromosome 14"/>
</dbReference>
<dbReference type="RNAct" id="Q8BK84">
    <property type="molecule type" value="protein"/>
</dbReference>
<dbReference type="Bgee" id="ENSMUSG00000063821">
    <property type="expression patterns" value="Expressed in quadriceps femoris and 22 other cell types or tissues"/>
</dbReference>
<dbReference type="ExpressionAtlas" id="Q8BK84">
    <property type="expression patterns" value="baseline and differential"/>
</dbReference>
<dbReference type="GO" id="GO:0005737">
    <property type="term" value="C:cytoplasm"/>
    <property type="evidence" value="ECO:0000314"/>
    <property type="project" value="UniProtKB"/>
</dbReference>
<dbReference type="GO" id="GO:0005634">
    <property type="term" value="C:nucleus"/>
    <property type="evidence" value="ECO:0000314"/>
    <property type="project" value="UniProtKB"/>
</dbReference>
<dbReference type="GO" id="GO:0032991">
    <property type="term" value="C:protein-containing complex"/>
    <property type="evidence" value="ECO:0007669"/>
    <property type="project" value="Ensembl"/>
</dbReference>
<dbReference type="GO" id="GO:0033549">
    <property type="term" value="F:MAP kinase phosphatase activity"/>
    <property type="evidence" value="ECO:0000315"/>
    <property type="project" value="UniProtKB"/>
</dbReference>
<dbReference type="GO" id="GO:0042803">
    <property type="term" value="F:protein homodimerization activity"/>
    <property type="evidence" value="ECO:0007669"/>
    <property type="project" value="Ensembl"/>
</dbReference>
<dbReference type="GO" id="GO:0004722">
    <property type="term" value="F:protein serine/threonine phosphatase activity"/>
    <property type="evidence" value="ECO:0007669"/>
    <property type="project" value="UniProtKB-EC"/>
</dbReference>
<dbReference type="GO" id="GO:0004725">
    <property type="term" value="F:protein tyrosine phosphatase activity"/>
    <property type="evidence" value="ECO:0007669"/>
    <property type="project" value="UniProtKB-EC"/>
</dbReference>
<dbReference type="GO" id="GO:0008138">
    <property type="term" value="F:protein tyrosine/serine/threonine phosphatase activity"/>
    <property type="evidence" value="ECO:0000250"/>
    <property type="project" value="UniProtKB"/>
</dbReference>
<dbReference type="GO" id="GO:0042593">
    <property type="term" value="P:glucose homeostasis"/>
    <property type="evidence" value="ECO:0000315"/>
    <property type="project" value="UniProtKB"/>
</dbReference>
<dbReference type="GO" id="GO:0042692">
    <property type="term" value="P:muscle cell differentiation"/>
    <property type="evidence" value="ECO:0000315"/>
    <property type="project" value="UniProtKB"/>
</dbReference>
<dbReference type="GO" id="GO:0070373">
    <property type="term" value="P:negative regulation of ERK1 and ERK2 cascade"/>
    <property type="evidence" value="ECO:0000315"/>
    <property type="project" value="UniProtKB"/>
</dbReference>
<dbReference type="GO" id="GO:0006470">
    <property type="term" value="P:protein dephosphorylation"/>
    <property type="evidence" value="ECO:0000250"/>
    <property type="project" value="UniProtKB"/>
</dbReference>
<dbReference type="CDD" id="cd14575">
    <property type="entry name" value="DUPD1"/>
    <property type="match status" value="1"/>
</dbReference>
<dbReference type="FunFam" id="3.90.190.10:FF:000037">
    <property type="entry name" value="dual specificity protein phosphatase 26"/>
    <property type="match status" value="1"/>
</dbReference>
<dbReference type="Gene3D" id="3.90.190.10">
    <property type="entry name" value="Protein tyrosine phosphatase superfamily"/>
    <property type="match status" value="1"/>
</dbReference>
<dbReference type="InterPro" id="IPR020405">
    <property type="entry name" value="Atypical_DUSP_subfamA"/>
</dbReference>
<dbReference type="InterPro" id="IPR000340">
    <property type="entry name" value="Dual-sp_phosphatase_cat-dom"/>
</dbReference>
<dbReference type="InterPro" id="IPR029021">
    <property type="entry name" value="Prot-tyrosine_phosphatase-like"/>
</dbReference>
<dbReference type="InterPro" id="IPR016130">
    <property type="entry name" value="Tyr_Pase_AS"/>
</dbReference>
<dbReference type="InterPro" id="IPR000387">
    <property type="entry name" value="Tyr_Pase_dom"/>
</dbReference>
<dbReference type="InterPro" id="IPR020422">
    <property type="entry name" value="TYR_PHOSPHATASE_DUAL_dom"/>
</dbReference>
<dbReference type="PANTHER" id="PTHR45682">
    <property type="entry name" value="AGAP008228-PA"/>
    <property type="match status" value="1"/>
</dbReference>
<dbReference type="PANTHER" id="PTHR45682:SF6">
    <property type="entry name" value="DUAL SPECIFICITY PHOSPHATASE 29"/>
    <property type="match status" value="1"/>
</dbReference>
<dbReference type="Pfam" id="PF00782">
    <property type="entry name" value="DSPc"/>
    <property type="match status" value="1"/>
</dbReference>
<dbReference type="PRINTS" id="PR01908">
    <property type="entry name" value="ADSPHPHTASE"/>
</dbReference>
<dbReference type="PRINTS" id="PR01909">
    <property type="entry name" value="ADSPHPHTASEA"/>
</dbReference>
<dbReference type="SMART" id="SM00195">
    <property type="entry name" value="DSPc"/>
    <property type="match status" value="1"/>
</dbReference>
<dbReference type="SUPFAM" id="SSF52799">
    <property type="entry name" value="(Phosphotyrosine protein) phosphatases II"/>
    <property type="match status" value="1"/>
</dbReference>
<dbReference type="PROSITE" id="PS00383">
    <property type="entry name" value="TYR_PHOSPHATASE_1"/>
    <property type="match status" value="1"/>
</dbReference>
<dbReference type="PROSITE" id="PS50056">
    <property type="entry name" value="TYR_PHOSPHATASE_2"/>
    <property type="match status" value="1"/>
</dbReference>
<dbReference type="PROSITE" id="PS50054">
    <property type="entry name" value="TYR_PHOSPHATASE_DUAL"/>
    <property type="match status" value="1"/>
</dbReference>
<sequence>MASGDTKTSVKHAHLCAERLSVREEEGDAEDYCTPGAFELERLFWKGSPQYTHVNEVWPRLHIGDEATALDRYGLQKAGFTHVLNAAHGRWNVDTGPDYYRDMAIEYHGVEADDVPTFDLSIFFYSAAAFIDSALRDDHSKILVHCAMGRSRSATLVLAYLMIHKNMTLVDAIQQVAKNRCVLPNRGFLKQLRELDKQLVKQRRQAGPGDSDLGL</sequence>
<protein>
    <recommendedName>
        <fullName evidence="9">Dual specificity phosphatase 29</fullName>
    </recommendedName>
    <alternativeName>
        <fullName>Dual specificity phosphatase DUPD1</fullName>
        <ecNumber evidence="1">3.1.3.16</ecNumber>
        <ecNumber evidence="1">3.1.3.48</ecNumber>
    </alternativeName>
</protein>
<keyword id="KW-0963">Cytoplasm</keyword>
<keyword id="KW-0378">Hydrolase</keyword>
<keyword id="KW-0539">Nucleus</keyword>
<keyword id="KW-0904">Protein phosphatase</keyword>
<keyword id="KW-1185">Reference proteome</keyword>
<organism>
    <name type="scientific">Mus musculus</name>
    <name type="common">Mouse</name>
    <dbReference type="NCBI Taxonomy" id="10090"/>
    <lineage>
        <taxon>Eukaryota</taxon>
        <taxon>Metazoa</taxon>
        <taxon>Chordata</taxon>
        <taxon>Craniata</taxon>
        <taxon>Vertebrata</taxon>
        <taxon>Euteleostomi</taxon>
        <taxon>Mammalia</taxon>
        <taxon>Eutheria</taxon>
        <taxon>Euarchontoglires</taxon>
        <taxon>Glires</taxon>
        <taxon>Rodentia</taxon>
        <taxon>Myomorpha</taxon>
        <taxon>Muroidea</taxon>
        <taxon>Muridae</taxon>
        <taxon>Murinae</taxon>
        <taxon>Mus</taxon>
        <taxon>Mus</taxon>
    </lineage>
</organism>
<comment type="function">
    <text evidence="1 4 5">Dual specificity phosphatase able to dephosphorylate phosphotyrosine, phosphoserine and phosphothreonine residues within the same substrate, with a preference for phosphotyrosine as a substrate (By similarity). Involved in the modulation of intracellular signaling cascades. In skeletal muscle regulates systemic glucose homeostasis by activating, AMPK, an energy sensor protein kinase (PubMed:30201684). Affects MAP kinase signaling though modulation of the MAPK1/2 cascade in skeletal muscle promoting muscle cell differentiation, development and atrophy (PubMed:32639872).</text>
</comment>
<comment type="catalytic activity">
    <reaction evidence="1">
        <text>O-phospho-L-tyrosyl-[protein] + H2O = L-tyrosyl-[protein] + phosphate</text>
        <dbReference type="Rhea" id="RHEA:10684"/>
        <dbReference type="Rhea" id="RHEA-COMP:10136"/>
        <dbReference type="Rhea" id="RHEA-COMP:20101"/>
        <dbReference type="ChEBI" id="CHEBI:15377"/>
        <dbReference type="ChEBI" id="CHEBI:43474"/>
        <dbReference type="ChEBI" id="CHEBI:46858"/>
        <dbReference type="ChEBI" id="CHEBI:61978"/>
        <dbReference type="EC" id="3.1.3.48"/>
    </reaction>
</comment>
<comment type="catalytic activity">
    <reaction evidence="1">
        <text>O-phospho-L-seryl-[protein] + H2O = L-seryl-[protein] + phosphate</text>
        <dbReference type="Rhea" id="RHEA:20629"/>
        <dbReference type="Rhea" id="RHEA-COMP:9863"/>
        <dbReference type="Rhea" id="RHEA-COMP:11604"/>
        <dbReference type="ChEBI" id="CHEBI:15377"/>
        <dbReference type="ChEBI" id="CHEBI:29999"/>
        <dbReference type="ChEBI" id="CHEBI:43474"/>
        <dbReference type="ChEBI" id="CHEBI:83421"/>
        <dbReference type="EC" id="3.1.3.16"/>
    </reaction>
</comment>
<comment type="catalytic activity">
    <reaction evidence="1">
        <text>O-phospho-L-threonyl-[protein] + H2O = L-threonyl-[protein] + phosphate</text>
        <dbReference type="Rhea" id="RHEA:47004"/>
        <dbReference type="Rhea" id="RHEA-COMP:11060"/>
        <dbReference type="Rhea" id="RHEA-COMP:11605"/>
        <dbReference type="ChEBI" id="CHEBI:15377"/>
        <dbReference type="ChEBI" id="CHEBI:30013"/>
        <dbReference type="ChEBI" id="CHEBI:43474"/>
        <dbReference type="ChEBI" id="CHEBI:61977"/>
        <dbReference type="EC" id="3.1.3.16"/>
    </reaction>
</comment>
<comment type="subunit">
    <text evidence="1 4">Homodimer (By similarity). Interacts with PRKAA2 (PubMed:30201684).</text>
</comment>
<comment type="subcellular location">
    <subcellularLocation>
        <location evidence="4 5">Cytoplasm</location>
    </subcellularLocation>
    <subcellularLocation>
        <location evidence="5">Nucleus</location>
    </subcellularLocation>
</comment>
<comment type="tissue specificity">
    <text evidence="3">Skeletal muscle, liver and adipose tissue.</text>
</comment>
<comment type="developmental stage">
    <text evidence="5">Up-regulated during muscle cell differentiation.</text>
</comment>
<comment type="induction">
    <text evidence="4 5">Deletion of the long non-coding RNA (lncRNA) H19 leads to a decreased DUSP29 expression in muscle (at protein level). Down-regulated in muscle of high-fat diets-induced glucose-intolerant mice (PubMed:30201684). Induced during neurogenic skeletal muscle atrophy (PubMed:32639872).</text>
</comment>
<comment type="similarity">
    <text evidence="8">Belongs to the protein-tyrosine phosphatase family. Non-receptor class dual specificity subfamily.</text>
</comment>
<accession>Q8BK84</accession>
<accession>B2RW26</accession>
<name>DUS29_MOUSE</name>
<reference key="1">
    <citation type="journal article" date="2005" name="Science">
        <title>The transcriptional landscape of the mammalian genome.</title>
        <authorList>
            <person name="Carninci P."/>
            <person name="Kasukawa T."/>
            <person name="Katayama S."/>
            <person name="Gough J."/>
            <person name="Frith M.C."/>
            <person name="Maeda N."/>
            <person name="Oyama R."/>
            <person name="Ravasi T."/>
            <person name="Lenhard B."/>
            <person name="Wells C."/>
            <person name="Kodzius R."/>
            <person name="Shimokawa K."/>
            <person name="Bajic V.B."/>
            <person name="Brenner S.E."/>
            <person name="Batalov S."/>
            <person name="Forrest A.R."/>
            <person name="Zavolan M."/>
            <person name="Davis M.J."/>
            <person name="Wilming L.G."/>
            <person name="Aidinis V."/>
            <person name="Allen J.E."/>
            <person name="Ambesi-Impiombato A."/>
            <person name="Apweiler R."/>
            <person name="Aturaliya R.N."/>
            <person name="Bailey T.L."/>
            <person name="Bansal M."/>
            <person name="Baxter L."/>
            <person name="Beisel K.W."/>
            <person name="Bersano T."/>
            <person name="Bono H."/>
            <person name="Chalk A.M."/>
            <person name="Chiu K.P."/>
            <person name="Choudhary V."/>
            <person name="Christoffels A."/>
            <person name="Clutterbuck D.R."/>
            <person name="Crowe M.L."/>
            <person name="Dalla E."/>
            <person name="Dalrymple B.P."/>
            <person name="de Bono B."/>
            <person name="Della Gatta G."/>
            <person name="di Bernardo D."/>
            <person name="Down T."/>
            <person name="Engstrom P."/>
            <person name="Fagiolini M."/>
            <person name="Faulkner G."/>
            <person name="Fletcher C.F."/>
            <person name="Fukushima T."/>
            <person name="Furuno M."/>
            <person name="Futaki S."/>
            <person name="Gariboldi M."/>
            <person name="Georgii-Hemming P."/>
            <person name="Gingeras T.R."/>
            <person name="Gojobori T."/>
            <person name="Green R.E."/>
            <person name="Gustincich S."/>
            <person name="Harbers M."/>
            <person name="Hayashi Y."/>
            <person name="Hensch T.K."/>
            <person name="Hirokawa N."/>
            <person name="Hill D."/>
            <person name="Huminiecki L."/>
            <person name="Iacono M."/>
            <person name="Ikeo K."/>
            <person name="Iwama A."/>
            <person name="Ishikawa T."/>
            <person name="Jakt M."/>
            <person name="Kanapin A."/>
            <person name="Katoh M."/>
            <person name="Kawasawa Y."/>
            <person name="Kelso J."/>
            <person name="Kitamura H."/>
            <person name="Kitano H."/>
            <person name="Kollias G."/>
            <person name="Krishnan S.P."/>
            <person name="Kruger A."/>
            <person name="Kummerfeld S.K."/>
            <person name="Kurochkin I.V."/>
            <person name="Lareau L.F."/>
            <person name="Lazarevic D."/>
            <person name="Lipovich L."/>
            <person name="Liu J."/>
            <person name="Liuni S."/>
            <person name="McWilliam S."/>
            <person name="Madan Babu M."/>
            <person name="Madera M."/>
            <person name="Marchionni L."/>
            <person name="Matsuda H."/>
            <person name="Matsuzawa S."/>
            <person name="Miki H."/>
            <person name="Mignone F."/>
            <person name="Miyake S."/>
            <person name="Morris K."/>
            <person name="Mottagui-Tabar S."/>
            <person name="Mulder N."/>
            <person name="Nakano N."/>
            <person name="Nakauchi H."/>
            <person name="Ng P."/>
            <person name="Nilsson R."/>
            <person name="Nishiguchi S."/>
            <person name="Nishikawa S."/>
            <person name="Nori F."/>
            <person name="Ohara O."/>
            <person name="Okazaki Y."/>
            <person name="Orlando V."/>
            <person name="Pang K.C."/>
            <person name="Pavan W.J."/>
            <person name="Pavesi G."/>
            <person name="Pesole G."/>
            <person name="Petrovsky N."/>
            <person name="Piazza S."/>
            <person name="Reed J."/>
            <person name="Reid J.F."/>
            <person name="Ring B.Z."/>
            <person name="Ringwald M."/>
            <person name="Rost B."/>
            <person name="Ruan Y."/>
            <person name="Salzberg S.L."/>
            <person name="Sandelin A."/>
            <person name="Schneider C."/>
            <person name="Schoenbach C."/>
            <person name="Sekiguchi K."/>
            <person name="Semple C.A."/>
            <person name="Seno S."/>
            <person name="Sessa L."/>
            <person name="Sheng Y."/>
            <person name="Shibata Y."/>
            <person name="Shimada H."/>
            <person name="Shimada K."/>
            <person name="Silva D."/>
            <person name="Sinclair B."/>
            <person name="Sperling S."/>
            <person name="Stupka E."/>
            <person name="Sugiura K."/>
            <person name="Sultana R."/>
            <person name="Takenaka Y."/>
            <person name="Taki K."/>
            <person name="Tammoja K."/>
            <person name="Tan S.L."/>
            <person name="Tang S."/>
            <person name="Taylor M.S."/>
            <person name="Tegner J."/>
            <person name="Teichmann S.A."/>
            <person name="Ueda H.R."/>
            <person name="van Nimwegen E."/>
            <person name="Verardo R."/>
            <person name="Wei C.L."/>
            <person name="Yagi K."/>
            <person name="Yamanishi H."/>
            <person name="Zabarovsky E."/>
            <person name="Zhu S."/>
            <person name="Zimmer A."/>
            <person name="Hide W."/>
            <person name="Bult C."/>
            <person name="Grimmond S.M."/>
            <person name="Teasdale R.D."/>
            <person name="Liu E.T."/>
            <person name="Brusic V."/>
            <person name="Quackenbush J."/>
            <person name="Wahlestedt C."/>
            <person name="Mattick J.S."/>
            <person name="Hume D.A."/>
            <person name="Kai C."/>
            <person name="Sasaki D."/>
            <person name="Tomaru Y."/>
            <person name="Fukuda S."/>
            <person name="Kanamori-Katayama M."/>
            <person name="Suzuki M."/>
            <person name="Aoki J."/>
            <person name="Arakawa T."/>
            <person name="Iida J."/>
            <person name="Imamura K."/>
            <person name="Itoh M."/>
            <person name="Kato T."/>
            <person name="Kawaji H."/>
            <person name="Kawagashira N."/>
            <person name="Kawashima T."/>
            <person name="Kojima M."/>
            <person name="Kondo S."/>
            <person name="Konno H."/>
            <person name="Nakano K."/>
            <person name="Ninomiya N."/>
            <person name="Nishio T."/>
            <person name="Okada M."/>
            <person name="Plessy C."/>
            <person name="Shibata K."/>
            <person name="Shiraki T."/>
            <person name="Suzuki S."/>
            <person name="Tagami M."/>
            <person name="Waki K."/>
            <person name="Watahiki A."/>
            <person name="Okamura-Oho Y."/>
            <person name="Suzuki H."/>
            <person name="Kawai J."/>
            <person name="Hayashizaki Y."/>
        </authorList>
    </citation>
    <scope>NUCLEOTIDE SEQUENCE [LARGE SCALE MRNA]</scope>
    <source>
        <strain>C57BL/6J</strain>
    </source>
</reference>
<reference key="2">
    <citation type="submission" date="2003-05" db="EMBL/GenBank/DDBJ databases">
        <title>Genomic sequence analysis in the mouse T-complex region.</title>
        <authorList>
            <person name="Brathwaite M."/>
            <person name="Waeltz P."/>
            <person name="Nagaraja R."/>
        </authorList>
    </citation>
    <scope>NUCLEOTIDE SEQUENCE [LARGE SCALE GENOMIC DNA]</scope>
    <source>
        <strain>C57BL/6J</strain>
    </source>
</reference>
<reference key="3">
    <citation type="journal article" date="2004" name="Genome Res.">
        <title>The status, quality, and expansion of the NIH full-length cDNA project: the Mammalian Gene Collection (MGC).</title>
        <authorList>
            <consortium name="The MGC Project Team"/>
        </authorList>
    </citation>
    <scope>NUCLEOTIDE SEQUENCE [LARGE SCALE MRNA]</scope>
    <source>
        <tissue>Testis</tissue>
    </source>
</reference>
<reference key="4">
    <citation type="journal article" date="2007" name="FEBS Lett.">
        <title>Identification and characterization of DUSP27, a novel dual-specific protein phosphatase.</title>
        <authorList>
            <person name="Friedberg I."/>
            <person name="Nika K."/>
            <person name="Tautz L."/>
            <person name="Saito K."/>
            <person name="Cerignoli F."/>
            <person name="Friedberg I."/>
            <person name="Godzik A."/>
            <person name="Mustelin T."/>
        </authorList>
    </citation>
    <scope>TISSUE SPECIFICITY</scope>
</reference>
<reference key="5">
    <citation type="journal article" date="2018" name="Diabetes">
        <title>H19 lncRNA Promotes Skeletal Muscle Insulin Sensitivity in Part by Targeting AMPK.</title>
        <authorList>
            <person name="Geng T."/>
            <person name="Liu Y."/>
            <person name="Xu Y."/>
            <person name="Jiang Y."/>
            <person name="Zhang N."/>
            <person name="Wang Z."/>
            <person name="Carmichael G.G."/>
            <person name="Taylor H.S."/>
            <person name="Li D."/>
            <person name="Huang Y."/>
        </authorList>
    </citation>
    <scope>INTERACTION WITH PRKAA2</scope>
    <scope>SUBCELLULAR LOCATION</scope>
    <scope>FUNCTION</scope>
    <scope>INDUCTION</scope>
    <scope>MUTAGENESIS OF CYS-146</scope>
</reference>
<reference key="6">
    <citation type="journal article" date="2020" name="Am. J. Physiol.">
        <title>Dual-Specificity Phosphatase 29 is Induced During Neurogenic Skeletal Muscle Atrophy and Attenuates Glucocorticoid Receptor Activity in Muscle Cell Culture.</title>
        <authorList>
            <person name="Cooper L.M."/>
            <person name="West R.C."/>
            <person name="Hayes C.S."/>
            <person name="Waddell D.S."/>
        </authorList>
    </citation>
    <scope>INDUCTION</scope>
    <scope>SUBCELLULAR LOCATION</scope>
    <scope>FUNCTION</scope>
    <scope>DEVELOPMENTAL STAGE</scope>
</reference>
<proteinExistence type="evidence at protein level"/>
<gene>
    <name evidence="9" type="primary">Dusp29</name>
    <name type="synonym">Dupd1</name>
    <name evidence="6 7" type="synonym">Dusp27</name>
</gene>
<evidence type="ECO:0000250" key="1">
    <source>
        <dbReference type="UniProtKB" id="Q68J44"/>
    </source>
</evidence>
<evidence type="ECO:0000255" key="2">
    <source>
        <dbReference type="PROSITE-ProRule" id="PRU00160"/>
    </source>
</evidence>
<evidence type="ECO:0000269" key="3">
    <source>
    </source>
</evidence>
<evidence type="ECO:0000269" key="4">
    <source>
    </source>
</evidence>
<evidence type="ECO:0000269" key="5">
    <source>
    </source>
</evidence>
<evidence type="ECO:0000303" key="6">
    <source>
    </source>
</evidence>
<evidence type="ECO:0000303" key="7">
    <source>
    </source>
</evidence>
<evidence type="ECO:0000305" key="8"/>
<evidence type="ECO:0000312" key="9">
    <source>
        <dbReference type="MGI" id="MGI:3647127"/>
    </source>
</evidence>
<feature type="chain" id="PRO_0000295879" description="Dual specificity phosphatase 29">
    <location>
        <begin position="1"/>
        <end position="215"/>
    </location>
</feature>
<feature type="domain" description="Tyrosine-protein phosphatase" evidence="2">
    <location>
        <begin position="53"/>
        <end position="201"/>
    </location>
</feature>
<feature type="active site" description="Phosphocysteine intermediate" evidence="2">
    <location>
        <position position="146"/>
    </location>
</feature>
<feature type="binding site" evidence="1">
    <location>
        <begin position="145"/>
        <end position="152"/>
    </location>
    <ligand>
        <name>substrate</name>
    </ligand>
</feature>
<feature type="mutagenesis site" description="Does not affect AMPK activity." evidence="4">
    <original>C</original>
    <variation>S</variation>
    <location>
        <position position="146"/>
    </location>
</feature>